<organism>
    <name type="scientific">Enterobacteria phage HK620</name>
    <name type="common">Bacteriophage HK620</name>
    <dbReference type="NCBI Taxonomy" id="155148"/>
    <lineage>
        <taxon>Viruses</taxon>
        <taxon>Duplodnaviria</taxon>
        <taxon>Heunggongvirae</taxon>
        <taxon>Uroviricota</taxon>
        <taxon>Caudoviricetes</taxon>
        <taxon>Lederbergvirus</taxon>
        <taxon>Lederbergvirus HK620</taxon>
    </lineage>
</organism>
<protein>
    <recommendedName>
        <fullName>Probable excisionase hkaC</fullName>
    </recommendedName>
</protein>
<dbReference type="EMBL" id="AF335538">
    <property type="protein sequence ID" value="AAK28851.1"/>
    <property type="molecule type" value="Genomic_DNA"/>
</dbReference>
<dbReference type="RefSeq" id="NP_112036.1">
    <property type="nucleotide sequence ID" value="NC_002730.1"/>
</dbReference>
<dbReference type="BMRB" id="Q9AZ38"/>
<dbReference type="SMR" id="Q9AZ38"/>
<dbReference type="GeneID" id="921018"/>
<dbReference type="KEGG" id="vg:921018"/>
<dbReference type="OrthoDB" id="22010at10239"/>
<dbReference type="Proteomes" id="UP000000725">
    <property type="component" value="Genome"/>
</dbReference>
<dbReference type="GO" id="GO:0003677">
    <property type="term" value="F:DNA binding"/>
    <property type="evidence" value="ECO:0007669"/>
    <property type="project" value="UniProtKB-KW"/>
</dbReference>
<dbReference type="GO" id="GO:0006310">
    <property type="term" value="P:DNA recombination"/>
    <property type="evidence" value="ECO:0007669"/>
    <property type="project" value="UniProtKB-KW"/>
</dbReference>
<dbReference type="GO" id="GO:0032359">
    <property type="term" value="P:provirus excision"/>
    <property type="evidence" value="ECO:0007669"/>
    <property type="project" value="UniProtKB-KW"/>
</dbReference>
<dbReference type="Gene3D" id="1.10.238.160">
    <property type="match status" value="1"/>
</dbReference>
<proteinExistence type="inferred from homology"/>
<reference key="1">
    <citation type="journal article" date="2001" name="J. Mol. Biol.">
        <title>Nucleotide sequence of coliphage HK620 and the evolution of lambdoid phages.</title>
        <authorList>
            <person name="Clark A.J."/>
            <person name="Inwood W."/>
            <person name="Cloutier T."/>
            <person name="Dhillon T.S."/>
        </authorList>
    </citation>
    <scope>NUCLEOTIDE SEQUENCE [LARGE SCALE GENOMIC DNA]</scope>
</reference>
<keyword id="KW-0233">DNA recombination</keyword>
<keyword id="KW-0238">DNA-binding</keyword>
<keyword id="KW-1185">Reference proteome</keyword>
<keyword id="KW-1250">Viral genome excision</keyword>
<comment type="function">
    <text evidence="1">Excisionase and integrase are necessary for the excision of prophage from the host genome by site-specific recombination at the att site.</text>
</comment>
<comment type="similarity">
    <text evidence="2">Belongs to the phage alpA excisionase family.</text>
</comment>
<evidence type="ECO:0000250" key="1"/>
<evidence type="ECO:0000305" key="2"/>
<accession>Q9AZ38</accession>
<feature type="chain" id="PRO_0000252164" description="Probable excisionase hkaC">
    <location>
        <begin position="1"/>
        <end position="66"/>
    </location>
</feature>
<sequence length="66" mass="7678">MQHELQPDSLVDLKFIMADTGFGKTFIYDRIKSGDLPKAKVIHGRARWLYRDHCEFKNKLLSRANG</sequence>
<name>VXIS_BPHK6</name>
<organismHost>
    <name type="scientific">Escherichia coli</name>
    <dbReference type="NCBI Taxonomy" id="562"/>
</organismHost>
<gene>
    <name type="primary">hkaC</name>
    <name type="synonym">xis</name>
</gene>